<proteinExistence type="inferred from homology"/>
<accession>Q0HPE7</accession>
<evidence type="ECO:0000255" key="1">
    <source>
        <dbReference type="HAMAP-Rule" id="MF_00379"/>
    </source>
</evidence>
<keyword id="KW-0963">Cytoplasm</keyword>
<keyword id="KW-0342">GTP-binding</keyword>
<keyword id="KW-0378">Hydrolase</keyword>
<keyword id="KW-0460">Magnesium</keyword>
<keyword id="KW-0479">Metal-binding</keyword>
<keyword id="KW-0547">Nucleotide-binding</keyword>
<keyword id="KW-0630">Potassium</keyword>
<keyword id="KW-0819">tRNA processing</keyword>
<protein>
    <recommendedName>
        <fullName evidence="1">tRNA modification GTPase MnmE</fullName>
        <ecNumber evidence="1">3.6.-.-</ecNumber>
    </recommendedName>
</protein>
<comment type="function">
    <text evidence="1">Exhibits a very high intrinsic GTPase hydrolysis rate. Involved in the addition of a carboxymethylaminomethyl (cmnm) group at the wobble position (U34) of certain tRNAs, forming tRNA-cmnm(5)s(2)U34.</text>
</comment>
<comment type="cofactor">
    <cofactor evidence="1">
        <name>K(+)</name>
        <dbReference type="ChEBI" id="CHEBI:29103"/>
    </cofactor>
    <text evidence="1">Binds 1 potassium ion per subunit.</text>
</comment>
<comment type="subunit">
    <text evidence="1">Homodimer. Heterotetramer of two MnmE and two MnmG subunits.</text>
</comment>
<comment type="subcellular location">
    <subcellularLocation>
        <location evidence="1">Cytoplasm</location>
    </subcellularLocation>
</comment>
<comment type="similarity">
    <text evidence="1">Belongs to the TRAFAC class TrmE-Era-EngA-EngB-Septin-like GTPase superfamily. TrmE GTPase family.</text>
</comment>
<reference key="1">
    <citation type="submission" date="2006-08" db="EMBL/GenBank/DDBJ databases">
        <title>Complete sequence of chromosome 1 of Shewanella sp. MR-7.</title>
        <authorList>
            <person name="Copeland A."/>
            <person name="Lucas S."/>
            <person name="Lapidus A."/>
            <person name="Barry K."/>
            <person name="Detter J.C."/>
            <person name="Glavina del Rio T."/>
            <person name="Hammon N."/>
            <person name="Israni S."/>
            <person name="Dalin E."/>
            <person name="Tice H."/>
            <person name="Pitluck S."/>
            <person name="Kiss H."/>
            <person name="Brettin T."/>
            <person name="Bruce D."/>
            <person name="Han C."/>
            <person name="Tapia R."/>
            <person name="Gilna P."/>
            <person name="Schmutz J."/>
            <person name="Larimer F."/>
            <person name="Land M."/>
            <person name="Hauser L."/>
            <person name="Kyrpides N."/>
            <person name="Mikhailova N."/>
            <person name="Nealson K."/>
            <person name="Konstantinidis K."/>
            <person name="Klappenbach J."/>
            <person name="Tiedje J."/>
            <person name="Richardson P."/>
        </authorList>
    </citation>
    <scope>NUCLEOTIDE SEQUENCE [LARGE SCALE GENOMIC DNA]</scope>
    <source>
        <strain>MR-7</strain>
    </source>
</reference>
<dbReference type="EC" id="3.6.-.-" evidence="1"/>
<dbReference type="EMBL" id="CP000444">
    <property type="protein sequence ID" value="ABI45008.1"/>
    <property type="molecule type" value="Genomic_DNA"/>
</dbReference>
<dbReference type="SMR" id="Q0HPE7"/>
<dbReference type="KEGG" id="shm:Shewmr7_4031"/>
<dbReference type="HOGENOM" id="CLU_019624_4_1_6"/>
<dbReference type="GO" id="GO:0005829">
    <property type="term" value="C:cytosol"/>
    <property type="evidence" value="ECO:0007669"/>
    <property type="project" value="TreeGrafter"/>
</dbReference>
<dbReference type="GO" id="GO:0005525">
    <property type="term" value="F:GTP binding"/>
    <property type="evidence" value="ECO:0007669"/>
    <property type="project" value="UniProtKB-UniRule"/>
</dbReference>
<dbReference type="GO" id="GO:0003924">
    <property type="term" value="F:GTPase activity"/>
    <property type="evidence" value="ECO:0007669"/>
    <property type="project" value="UniProtKB-UniRule"/>
</dbReference>
<dbReference type="GO" id="GO:0046872">
    <property type="term" value="F:metal ion binding"/>
    <property type="evidence" value="ECO:0007669"/>
    <property type="project" value="UniProtKB-KW"/>
</dbReference>
<dbReference type="GO" id="GO:0030488">
    <property type="term" value="P:tRNA methylation"/>
    <property type="evidence" value="ECO:0007669"/>
    <property type="project" value="TreeGrafter"/>
</dbReference>
<dbReference type="GO" id="GO:0002098">
    <property type="term" value="P:tRNA wobble uridine modification"/>
    <property type="evidence" value="ECO:0007669"/>
    <property type="project" value="TreeGrafter"/>
</dbReference>
<dbReference type="CDD" id="cd04164">
    <property type="entry name" value="trmE"/>
    <property type="match status" value="1"/>
</dbReference>
<dbReference type="CDD" id="cd14858">
    <property type="entry name" value="TrmE_N"/>
    <property type="match status" value="1"/>
</dbReference>
<dbReference type="FunFam" id="3.30.1360.120:FF:000001">
    <property type="entry name" value="tRNA modification GTPase MnmE"/>
    <property type="match status" value="1"/>
</dbReference>
<dbReference type="FunFam" id="3.40.50.300:FF:000249">
    <property type="entry name" value="tRNA modification GTPase MnmE"/>
    <property type="match status" value="1"/>
</dbReference>
<dbReference type="Gene3D" id="3.40.50.300">
    <property type="entry name" value="P-loop containing nucleotide triphosphate hydrolases"/>
    <property type="match status" value="1"/>
</dbReference>
<dbReference type="Gene3D" id="3.30.1360.120">
    <property type="entry name" value="Probable tRNA modification gtpase trme, domain 1"/>
    <property type="match status" value="1"/>
</dbReference>
<dbReference type="Gene3D" id="1.20.120.430">
    <property type="entry name" value="tRNA modification GTPase MnmE domain 2"/>
    <property type="match status" value="1"/>
</dbReference>
<dbReference type="HAMAP" id="MF_00379">
    <property type="entry name" value="GTPase_MnmE"/>
    <property type="match status" value="1"/>
</dbReference>
<dbReference type="InterPro" id="IPR031168">
    <property type="entry name" value="G_TrmE"/>
</dbReference>
<dbReference type="InterPro" id="IPR006073">
    <property type="entry name" value="GTP-bd"/>
</dbReference>
<dbReference type="InterPro" id="IPR018948">
    <property type="entry name" value="GTP-bd_TrmE_N"/>
</dbReference>
<dbReference type="InterPro" id="IPR004520">
    <property type="entry name" value="GTPase_MnmE"/>
</dbReference>
<dbReference type="InterPro" id="IPR027368">
    <property type="entry name" value="MnmE_dom2"/>
</dbReference>
<dbReference type="InterPro" id="IPR025867">
    <property type="entry name" value="MnmE_helical"/>
</dbReference>
<dbReference type="InterPro" id="IPR027417">
    <property type="entry name" value="P-loop_NTPase"/>
</dbReference>
<dbReference type="InterPro" id="IPR005225">
    <property type="entry name" value="Small_GTP-bd"/>
</dbReference>
<dbReference type="InterPro" id="IPR027266">
    <property type="entry name" value="TrmE/GcvT_dom1"/>
</dbReference>
<dbReference type="NCBIfam" id="TIGR00450">
    <property type="entry name" value="mnmE_trmE_thdF"/>
    <property type="match status" value="1"/>
</dbReference>
<dbReference type="NCBIfam" id="NF003661">
    <property type="entry name" value="PRK05291.1-3"/>
    <property type="match status" value="1"/>
</dbReference>
<dbReference type="NCBIfam" id="TIGR00231">
    <property type="entry name" value="small_GTP"/>
    <property type="match status" value="1"/>
</dbReference>
<dbReference type="PANTHER" id="PTHR42714">
    <property type="entry name" value="TRNA MODIFICATION GTPASE GTPBP3"/>
    <property type="match status" value="1"/>
</dbReference>
<dbReference type="PANTHER" id="PTHR42714:SF2">
    <property type="entry name" value="TRNA MODIFICATION GTPASE GTPBP3, MITOCHONDRIAL"/>
    <property type="match status" value="1"/>
</dbReference>
<dbReference type="Pfam" id="PF01926">
    <property type="entry name" value="MMR_HSR1"/>
    <property type="match status" value="1"/>
</dbReference>
<dbReference type="Pfam" id="PF12631">
    <property type="entry name" value="MnmE_helical"/>
    <property type="match status" value="1"/>
</dbReference>
<dbReference type="Pfam" id="PF10396">
    <property type="entry name" value="TrmE_N"/>
    <property type="match status" value="1"/>
</dbReference>
<dbReference type="SUPFAM" id="SSF52540">
    <property type="entry name" value="P-loop containing nucleoside triphosphate hydrolases"/>
    <property type="match status" value="1"/>
</dbReference>
<dbReference type="SUPFAM" id="SSF116878">
    <property type="entry name" value="TrmE connector domain"/>
    <property type="match status" value="1"/>
</dbReference>
<dbReference type="PROSITE" id="PS51709">
    <property type="entry name" value="G_TRME"/>
    <property type="match status" value="1"/>
</dbReference>
<organism>
    <name type="scientific">Shewanella sp. (strain MR-7)</name>
    <dbReference type="NCBI Taxonomy" id="60481"/>
    <lineage>
        <taxon>Bacteria</taxon>
        <taxon>Pseudomonadati</taxon>
        <taxon>Pseudomonadota</taxon>
        <taxon>Gammaproteobacteria</taxon>
        <taxon>Alteromonadales</taxon>
        <taxon>Shewanellaceae</taxon>
        <taxon>Shewanella</taxon>
    </lineage>
</organism>
<sequence length="453" mass="49226">MTTDTIVAQATAPGRGGVGIIRISGDKATDVAMAVLGHLPKPRYADYCDFKNASGQVIDQGIALYFKGPNSFTGEDVLELQGHGGQIVLDMLIKRVLEVEGIRIAKPGEFSEQAFMNDKLDLTQAEAIADLIDATSEQAAKSALQSLQGEFSKEVHELVDQVTHLRLYVEAAIDFPDEEVDFLSDGKIANALYKIIDKLSVVQASAKQGSIIREGMKVVIAGRPNAGKSSLLNALAGKESAIVTEIAGTTRDVLREHIHLDGMPLHIIDTAGLRDTTDTVEQIGIERAWNEINSADRVLFMVDGTTTDAVDPHDIWPDFINRLPANLGVTVVRNKADLTGENLAMTEEKGYSVYRISAKTGLGVEELKQHLKSLMGYQSNLEGGFIARRRHLEALDIAASHLQLGKEQLEIYLAGELLAEELRMAQLALSEITGRFTSDDLLGKIFSSFCIGK</sequence>
<name>MNME_SHESR</name>
<feature type="chain" id="PRO_1000060056" description="tRNA modification GTPase MnmE">
    <location>
        <begin position="1"/>
        <end position="453"/>
    </location>
</feature>
<feature type="domain" description="TrmE-type G">
    <location>
        <begin position="215"/>
        <end position="376"/>
    </location>
</feature>
<feature type="binding site" evidence="1">
    <location>
        <position position="22"/>
    </location>
    <ligand>
        <name>(6S)-5-formyl-5,6,7,8-tetrahydrofolate</name>
        <dbReference type="ChEBI" id="CHEBI:57457"/>
    </ligand>
</feature>
<feature type="binding site" evidence="1">
    <location>
        <position position="79"/>
    </location>
    <ligand>
        <name>(6S)-5-formyl-5,6,7,8-tetrahydrofolate</name>
        <dbReference type="ChEBI" id="CHEBI:57457"/>
    </ligand>
</feature>
<feature type="binding site" evidence="1">
    <location>
        <position position="119"/>
    </location>
    <ligand>
        <name>(6S)-5-formyl-5,6,7,8-tetrahydrofolate</name>
        <dbReference type="ChEBI" id="CHEBI:57457"/>
    </ligand>
</feature>
<feature type="binding site" evidence="1">
    <location>
        <begin position="225"/>
        <end position="230"/>
    </location>
    <ligand>
        <name>GTP</name>
        <dbReference type="ChEBI" id="CHEBI:37565"/>
    </ligand>
</feature>
<feature type="binding site" evidence="1">
    <location>
        <position position="225"/>
    </location>
    <ligand>
        <name>K(+)</name>
        <dbReference type="ChEBI" id="CHEBI:29103"/>
    </ligand>
</feature>
<feature type="binding site" evidence="1">
    <location>
        <position position="229"/>
    </location>
    <ligand>
        <name>Mg(2+)</name>
        <dbReference type="ChEBI" id="CHEBI:18420"/>
    </ligand>
</feature>
<feature type="binding site" evidence="1">
    <location>
        <begin position="244"/>
        <end position="250"/>
    </location>
    <ligand>
        <name>GTP</name>
        <dbReference type="ChEBI" id="CHEBI:37565"/>
    </ligand>
</feature>
<feature type="binding site" evidence="1">
    <location>
        <position position="244"/>
    </location>
    <ligand>
        <name>K(+)</name>
        <dbReference type="ChEBI" id="CHEBI:29103"/>
    </ligand>
</feature>
<feature type="binding site" evidence="1">
    <location>
        <position position="246"/>
    </location>
    <ligand>
        <name>K(+)</name>
        <dbReference type="ChEBI" id="CHEBI:29103"/>
    </ligand>
</feature>
<feature type="binding site" evidence="1">
    <location>
        <position position="249"/>
    </location>
    <ligand>
        <name>K(+)</name>
        <dbReference type="ChEBI" id="CHEBI:29103"/>
    </ligand>
</feature>
<feature type="binding site" evidence="1">
    <location>
        <position position="250"/>
    </location>
    <ligand>
        <name>Mg(2+)</name>
        <dbReference type="ChEBI" id="CHEBI:18420"/>
    </ligand>
</feature>
<feature type="binding site" evidence="1">
    <location>
        <begin position="269"/>
        <end position="272"/>
    </location>
    <ligand>
        <name>GTP</name>
        <dbReference type="ChEBI" id="CHEBI:37565"/>
    </ligand>
</feature>
<feature type="binding site" evidence="1">
    <location>
        <begin position="334"/>
        <end position="337"/>
    </location>
    <ligand>
        <name>GTP</name>
        <dbReference type="ChEBI" id="CHEBI:37565"/>
    </ligand>
</feature>
<feature type="binding site" evidence="1">
    <location>
        <position position="453"/>
    </location>
    <ligand>
        <name>(6S)-5-formyl-5,6,7,8-tetrahydrofolate</name>
        <dbReference type="ChEBI" id="CHEBI:57457"/>
    </ligand>
</feature>
<gene>
    <name evidence="1" type="primary">mnmE</name>
    <name evidence="1" type="synonym">trmE</name>
    <name type="ordered locus">Shewmr7_4031</name>
</gene>